<dbReference type="EC" id="6.3.4.3" evidence="1"/>
<dbReference type="EMBL" id="AM260525">
    <property type="protein sequence ID" value="CAK00634.1"/>
    <property type="molecule type" value="Genomic_DNA"/>
</dbReference>
<dbReference type="RefSeq" id="WP_012230481.1">
    <property type="nucleotide sequence ID" value="NC_010161.1"/>
</dbReference>
<dbReference type="SMR" id="A9IM41"/>
<dbReference type="KEGG" id="btr:BT_0147"/>
<dbReference type="eggNOG" id="COG2759">
    <property type="taxonomic scope" value="Bacteria"/>
</dbReference>
<dbReference type="HOGENOM" id="CLU_003601_3_3_5"/>
<dbReference type="UniPathway" id="UPA00193"/>
<dbReference type="Proteomes" id="UP000001592">
    <property type="component" value="Chromosome"/>
</dbReference>
<dbReference type="GO" id="GO:0005524">
    <property type="term" value="F:ATP binding"/>
    <property type="evidence" value="ECO:0007669"/>
    <property type="project" value="UniProtKB-UniRule"/>
</dbReference>
<dbReference type="GO" id="GO:0004329">
    <property type="term" value="F:formate-tetrahydrofolate ligase activity"/>
    <property type="evidence" value="ECO:0007669"/>
    <property type="project" value="UniProtKB-UniRule"/>
</dbReference>
<dbReference type="GO" id="GO:0035999">
    <property type="term" value="P:tetrahydrofolate interconversion"/>
    <property type="evidence" value="ECO:0007669"/>
    <property type="project" value="UniProtKB-UniRule"/>
</dbReference>
<dbReference type="CDD" id="cd00477">
    <property type="entry name" value="FTHFS"/>
    <property type="match status" value="1"/>
</dbReference>
<dbReference type="FunFam" id="3.30.1510.10:FF:000001">
    <property type="entry name" value="Formate--tetrahydrofolate ligase"/>
    <property type="match status" value="1"/>
</dbReference>
<dbReference type="Gene3D" id="3.30.1510.10">
    <property type="entry name" value="Domain 2, N(10)-formyltetrahydrofolate synthetase"/>
    <property type="match status" value="1"/>
</dbReference>
<dbReference type="Gene3D" id="3.10.410.10">
    <property type="entry name" value="Formyltetrahydrofolate synthetase, domain 3"/>
    <property type="match status" value="1"/>
</dbReference>
<dbReference type="Gene3D" id="3.40.50.300">
    <property type="entry name" value="P-loop containing nucleotide triphosphate hydrolases"/>
    <property type="match status" value="1"/>
</dbReference>
<dbReference type="HAMAP" id="MF_01543">
    <property type="entry name" value="FTHFS"/>
    <property type="match status" value="1"/>
</dbReference>
<dbReference type="InterPro" id="IPR000559">
    <property type="entry name" value="Formate_THF_ligase"/>
</dbReference>
<dbReference type="InterPro" id="IPR020628">
    <property type="entry name" value="Formate_THF_ligase_CS"/>
</dbReference>
<dbReference type="InterPro" id="IPR027417">
    <property type="entry name" value="P-loop_NTPase"/>
</dbReference>
<dbReference type="NCBIfam" id="NF010030">
    <property type="entry name" value="PRK13505.1"/>
    <property type="match status" value="1"/>
</dbReference>
<dbReference type="Pfam" id="PF01268">
    <property type="entry name" value="FTHFS"/>
    <property type="match status" value="1"/>
</dbReference>
<dbReference type="SUPFAM" id="SSF52540">
    <property type="entry name" value="P-loop containing nucleoside triphosphate hydrolases"/>
    <property type="match status" value="1"/>
</dbReference>
<dbReference type="PROSITE" id="PS00721">
    <property type="entry name" value="FTHFS_1"/>
    <property type="match status" value="1"/>
</dbReference>
<dbReference type="PROSITE" id="PS00722">
    <property type="entry name" value="FTHFS_2"/>
    <property type="match status" value="1"/>
</dbReference>
<gene>
    <name evidence="1" type="primary">fhs</name>
    <name type="ordered locus">BT_0147</name>
</gene>
<accession>A9IM41</accession>
<comment type="catalytic activity">
    <reaction evidence="1">
        <text>(6S)-5,6,7,8-tetrahydrofolate + formate + ATP = (6R)-10-formyltetrahydrofolate + ADP + phosphate</text>
        <dbReference type="Rhea" id="RHEA:20221"/>
        <dbReference type="ChEBI" id="CHEBI:15740"/>
        <dbReference type="ChEBI" id="CHEBI:30616"/>
        <dbReference type="ChEBI" id="CHEBI:43474"/>
        <dbReference type="ChEBI" id="CHEBI:57453"/>
        <dbReference type="ChEBI" id="CHEBI:195366"/>
        <dbReference type="ChEBI" id="CHEBI:456216"/>
        <dbReference type="EC" id="6.3.4.3"/>
    </reaction>
</comment>
<comment type="pathway">
    <text evidence="1">One-carbon metabolism; tetrahydrofolate interconversion.</text>
</comment>
<comment type="similarity">
    <text evidence="1">Belongs to the formate--tetrahydrofolate ligase family.</text>
</comment>
<sequence length="557" mass="60207">MHKTDIEIAHTAKKQHITEIAQKIGIAHENLIPYGHDKAKISSSYIKSLNNNPDGKLILVTAINPTPAGEGKTTTTVGLSDALNLIGKKTIATLREPSLGPCFGVKGGAAGGGYAQVIPMDDLNLHFTGDFHAITAAHNLLAAMIDNHIYWGNPLNIDPRRIVWKRVLDMNDRALRDIVISLGGITNGFPRQTGFDITVASEIMALLCLSENLENLTQRLKKIIVAYRHDKTPVTVADLNAEGAMAVLLKDAIQPNLVQTIENNPVLVHGGPFANIAHGCNSVIATKTALKLADYVVTEAGFGADLGAEKFFNIKCRQTGIVPNATVIVATIRALKMNGGVDKNNLTEENITALEKGAANLVRHIKNMALYGIPCVVAINHFDSDSDAEIRTLQKIVATTGHKALICKHWEQGGKGAVALAQELVTLIEKQDSDFKVLYQDDIPLVQKINCIITKLYGGRGAIISATILKQLESWEKEGFGTYPICMAKTPYSFSADPKQYGAPVDFEIPVREVRLCAGAGFIVVICGDVMTMPGLPHYPAAEKIHLDENDQIQGLS</sequence>
<evidence type="ECO:0000255" key="1">
    <source>
        <dbReference type="HAMAP-Rule" id="MF_01543"/>
    </source>
</evidence>
<organism>
    <name type="scientific">Bartonella tribocorum (strain CIP 105476 / IBS 506)</name>
    <dbReference type="NCBI Taxonomy" id="382640"/>
    <lineage>
        <taxon>Bacteria</taxon>
        <taxon>Pseudomonadati</taxon>
        <taxon>Pseudomonadota</taxon>
        <taxon>Alphaproteobacteria</taxon>
        <taxon>Hyphomicrobiales</taxon>
        <taxon>Bartonellaceae</taxon>
        <taxon>Bartonella</taxon>
    </lineage>
</organism>
<keyword id="KW-0067">ATP-binding</keyword>
<keyword id="KW-0436">Ligase</keyword>
<keyword id="KW-0547">Nucleotide-binding</keyword>
<keyword id="KW-0554">One-carbon metabolism</keyword>
<feature type="chain" id="PRO_0000333312" description="Formate--tetrahydrofolate ligase">
    <location>
        <begin position="1"/>
        <end position="557"/>
    </location>
</feature>
<feature type="binding site" evidence="1">
    <location>
        <begin position="66"/>
        <end position="73"/>
    </location>
    <ligand>
        <name>ATP</name>
        <dbReference type="ChEBI" id="CHEBI:30616"/>
    </ligand>
</feature>
<name>FTHS_BART1</name>
<protein>
    <recommendedName>
        <fullName evidence="1">Formate--tetrahydrofolate ligase</fullName>
        <ecNumber evidence="1">6.3.4.3</ecNumber>
    </recommendedName>
    <alternativeName>
        <fullName evidence="1">Formyltetrahydrofolate synthetase</fullName>
        <shortName evidence="1">FHS</shortName>
        <shortName evidence="1">FTHFS</shortName>
    </alternativeName>
</protein>
<reference key="1">
    <citation type="journal article" date="2007" name="Nat. Genet.">
        <title>Genomic analysis of Bartonella identifies type IV secretion systems as host adaptability factors.</title>
        <authorList>
            <person name="Saenz H.L."/>
            <person name="Engel P."/>
            <person name="Stoeckli M.C."/>
            <person name="Lanz C."/>
            <person name="Raddatz G."/>
            <person name="Vayssier-Taussat M."/>
            <person name="Birtles R."/>
            <person name="Schuster S.C."/>
            <person name="Dehio C."/>
        </authorList>
    </citation>
    <scope>NUCLEOTIDE SEQUENCE [LARGE SCALE GENOMIC DNA]</scope>
    <source>
        <strain>CIP 105476 / IBS 506</strain>
    </source>
</reference>
<proteinExistence type="inferred from homology"/>